<evidence type="ECO:0000255" key="1">
    <source>
        <dbReference type="HAMAP-Rule" id="MF_01725"/>
    </source>
</evidence>
<comment type="function">
    <text evidence="1">Part of the ABC transporter complex ZnuABC involved in zinc import. Responsible for energy coupling to the transport system.</text>
</comment>
<comment type="catalytic activity">
    <reaction evidence="1">
        <text>Zn(2+)(out) + ATP(in) + H2O(in) = Zn(2+)(in) + ADP(in) + phosphate(in) + H(+)(in)</text>
        <dbReference type="Rhea" id="RHEA:29795"/>
        <dbReference type="ChEBI" id="CHEBI:15377"/>
        <dbReference type="ChEBI" id="CHEBI:15378"/>
        <dbReference type="ChEBI" id="CHEBI:29105"/>
        <dbReference type="ChEBI" id="CHEBI:30616"/>
        <dbReference type="ChEBI" id="CHEBI:43474"/>
        <dbReference type="ChEBI" id="CHEBI:456216"/>
        <dbReference type="EC" id="7.2.2.20"/>
    </reaction>
</comment>
<comment type="subunit">
    <text evidence="1">The complex is composed of two ATP-binding proteins (ZnuC), two transmembrane proteins (ZnuB) and a solute-binding protein (ZnuA).</text>
</comment>
<comment type="subcellular location">
    <subcellularLocation>
        <location evidence="1">Cell inner membrane</location>
        <topology evidence="1">Peripheral membrane protein</topology>
    </subcellularLocation>
</comment>
<comment type="similarity">
    <text evidence="1">Belongs to the ABC transporter superfamily. Zinc importer (TC 3.A.1.15.5) family.</text>
</comment>
<organism>
    <name type="scientific">Escherichia coli O1:K1 / APEC</name>
    <dbReference type="NCBI Taxonomy" id="405955"/>
    <lineage>
        <taxon>Bacteria</taxon>
        <taxon>Pseudomonadati</taxon>
        <taxon>Pseudomonadota</taxon>
        <taxon>Gammaproteobacteria</taxon>
        <taxon>Enterobacterales</taxon>
        <taxon>Enterobacteriaceae</taxon>
        <taxon>Escherichia</taxon>
    </lineage>
</organism>
<proteinExistence type="inferred from homology"/>
<gene>
    <name evidence="1" type="primary">znuC</name>
    <name type="ordered locus">Ecok1_17150</name>
    <name type="ORF">APECO1_908</name>
</gene>
<accession>A1AC19</accession>
<protein>
    <recommendedName>
        <fullName evidence="1">Zinc import ATP-binding protein ZnuC</fullName>
        <ecNumber evidence="1">7.2.2.20</ecNumber>
    </recommendedName>
</protein>
<name>ZNUC_ECOK1</name>
<feature type="chain" id="PRO_0000281506" description="Zinc import ATP-binding protein ZnuC">
    <location>
        <begin position="1"/>
        <end position="251"/>
    </location>
</feature>
<feature type="domain" description="ABC transporter" evidence="1">
    <location>
        <begin position="5"/>
        <end position="220"/>
    </location>
</feature>
<feature type="binding site" evidence="1">
    <location>
        <begin position="37"/>
        <end position="44"/>
    </location>
    <ligand>
        <name>ATP</name>
        <dbReference type="ChEBI" id="CHEBI:30616"/>
    </ligand>
</feature>
<reference key="1">
    <citation type="journal article" date="2007" name="J. Bacteriol.">
        <title>The genome sequence of avian pathogenic Escherichia coli strain O1:K1:H7 shares strong similarities with human extraintestinal pathogenic E. coli genomes.</title>
        <authorList>
            <person name="Johnson T.J."/>
            <person name="Kariyawasam S."/>
            <person name="Wannemuehler Y."/>
            <person name="Mangiamele P."/>
            <person name="Johnson S.J."/>
            <person name="Doetkott C."/>
            <person name="Skyberg J.A."/>
            <person name="Lynne A.M."/>
            <person name="Johnson J.R."/>
            <person name="Nolan L.K."/>
        </authorList>
    </citation>
    <scope>NUCLEOTIDE SEQUENCE [LARGE SCALE GENOMIC DNA]</scope>
</reference>
<keyword id="KW-0067">ATP-binding</keyword>
<keyword id="KW-0997">Cell inner membrane</keyword>
<keyword id="KW-1003">Cell membrane</keyword>
<keyword id="KW-0406">Ion transport</keyword>
<keyword id="KW-0472">Membrane</keyword>
<keyword id="KW-0547">Nucleotide-binding</keyword>
<keyword id="KW-1185">Reference proteome</keyword>
<keyword id="KW-1278">Translocase</keyword>
<keyword id="KW-0813">Transport</keyword>
<keyword id="KW-0862">Zinc</keyword>
<keyword id="KW-0864">Zinc transport</keyword>
<sequence length="251" mass="27867">MTSLVSLENVSVSFGQRRVLSDVSLELKPGKILTLLGPNGAGKSTLVRVVLGLVTPDEGVIKRNGKLRIGYVPQKLYLDTTLPLTVNRFLRLRPGTHKEDILPALKRVQAGHLINAPMQKLSGGETQRVLLARALLNRPQLLVLDEPTQGVDVNGQVALYDLIDQLRRELDCGVLMVSHDLHLVMAKTDEVLCLNHHICCSGTPEVVSLHPEFISMFGPRGAEQLGIYRHHHNHRHDLQGRIVLRRGNDRS</sequence>
<dbReference type="EC" id="7.2.2.20" evidence="1"/>
<dbReference type="EMBL" id="CP000468">
    <property type="protein sequence ID" value="ABJ01209.1"/>
    <property type="molecule type" value="Genomic_DNA"/>
</dbReference>
<dbReference type="RefSeq" id="WP_000202996.1">
    <property type="nucleotide sequence ID" value="NZ_CADILS010000034.1"/>
</dbReference>
<dbReference type="SMR" id="A1AC19"/>
<dbReference type="GeneID" id="93776132"/>
<dbReference type="KEGG" id="ecv:APECO1_908"/>
<dbReference type="HOGENOM" id="CLU_000604_1_11_6"/>
<dbReference type="Proteomes" id="UP000008216">
    <property type="component" value="Chromosome"/>
</dbReference>
<dbReference type="GO" id="GO:0005886">
    <property type="term" value="C:plasma membrane"/>
    <property type="evidence" value="ECO:0007669"/>
    <property type="project" value="UniProtKB-SubCell"/>
</dbReference>
<dbReference type="GO" id="GO:0015633">
    <property type="term" value="F:ABC-type zinc transporter activity"/>
    <property type="evidence" value="ECO:0007669"/>
    <property type="project" value="UniProtKB-EC"/>
</dbReference>
<dbReference type="GO" id="GO:0005524">
    <property type="term" value="F:ATP binding"/>
    <property type="evidence" value="ECO:0007669"/>
    <property type="project" value="UniProtKB-KW"/>
</dbReference>
<dbReference type="GO" id="GO:0016887">
    <property type="term" value="F:ATP hydrolysis activity"/>
    <property type="evidence" value="ECO:0007669"/>
    <property type="project" value="InterPro"/>
</dbReference>
<dbReference type="GO" id="GO:0010043">
    <property type="term" value="P:response to zinc ion"/>
    <property type="evidence" value="ECO:0007669"/>
    <property type="project" value="TreeGrafter"/>
</dbReference>
<dbReference type="CDD" id="cd03235">
    <property type="entry name" value="ABC_Metallic_Cations"/>
    <property type="match status" value="1"/>
</dbReference>
<dbReference type="FunFam" id="3.40.50.300:FF:000392">
    <property type="entry name" value="Zinc import ATP-binding protein ZnuC"/>
    <property type="match status" value="1"/>
</dbReference>
<dbReference type="Gene3D" id="3.40.50.300">
    <property type="entry name" value="P-loop containing nucleotide triphosphate hydrolases"/>
    <property type="match status" value="1"/>
</dbReference>
<dbReference type="InterPro" id="IPR003593">
    <property type="entry name" value="AAA+_ATPase"/>
</dbReference>
<dbReference type="InterPro" id="IPR003439">
    <property type="entry name" value="ABC_transporter-like_ATP-bd"/>
</dbReference>
<dbReference type="InterPro" id="IPR050153">
    <property type="entry name" value="Metal_Ion_Import_ABC"/>
</dbReference>
<dbReference type="InterPro" id="IPR027417">
    <property type="entry name" value="P-loop_NTPase"/>
</dbReference>
<dbReference type="NCBIfam" id="NF007090">
    <property type="entry name" value="PRK09544.1"/>
    <property type="match status" value="1"/>
</dbReference>
<dbReference type="PANTHER" id="PTHR42734">
    <property type="entry name" value="METAL TRANSPORT SYSTEM ATP-BINDING PROTEIN TM_0124-RELATED"/>
    <property type="match status" value="1"/>
</dbReference>
<dbReference type="PANTHER" id="PTHR42734:SF9">
    <property type="entry name" value="ZINC IMPORT ATP-BINDING PROTEIN ZNUC"/>
    <property type="match status" value="1"/>
</dbReference>
<dbReference type="Pfam" id="PF00005">
    <property type="entry name" value="ABC_tran"/>
    <property type="match status" value="1"/>
</dbReference>
<dbReference type="SMART" id="SM00382">
    <property type="entry name" value="AAA"/>
    <property type="match status" value="1"/>
</dbReference>
<dbReference type="SUPFAM" id="SSF52540">
    <property type="entry name" value="P-loop containing nucleoside triphosphate hydrolases"/>
    <property type="match status" value="1"/>
</dbReference>
<dbReference type="PROSITE" id="PS50893">
    <property type="entry name" value="ABC_TRANSPORTER_2"/>
    <property type="match status" value="1"/>
</dbReference>
<dbReference type="PROSITE" id="PS51298">
    <property type="entry name" value="ZNUC"/>
    <property type="match status" value="1"/>
</dbReference>